<sequence length="1221" mass="136242">MIDVNKFESMQIGLASPNKIRSWSYGEVKKPETINYRTLKPEKDGLFDERIFGPTKDYACACGKYKGVRYKGIVCDRCGVEVTTSHVRRERMGHIELAAPVTHIWYFKGIPSRMGLVLDVSPKQLEEVIYFAAYIVIDPGDTGLEAKQLLTEAEYREEKAKYGNRFVAKMGAEAIRDLLKQVDLDKEVTALKAELQTLKGQKRTRAIRRLDILDAFRNSGNKPEWMVMETVPVIPPDLRPMVQLEGGRFATSDLNDLYRRVINRNNRLKKLLDMHAPGLIVQNEERMLQEAVDALIDNGRRGRPVVGPGNRPLKSISHMLKGKQGRFRQNLLGKRVDYSGRSVIDVSPELKFYQCGVPRPMALELFKPFVMRELVRRGIASNIKNAKRKIDREDDDIWDVLEYVIKERPVLLNRAPTLHRLSIQAFEPVLVPGKALRLHPLACEAYNADFDGDQMAIHVPLSDEAVAESRLLMLAAHHILTPKDGTPIVTPSQDIVLGNYWLTQAEIGREGEGMIFATPEEATIAYNNGDIHYHTIIGVSAASMPKKDWGAGHEDSIFVTTYGRLVFNSLFPDDYFYINEPTQDNLKQPMADKYFLEDGQDIQDKIAEIGQDLVATPFKKGFLGDTISEIYKRYRVQRTSEYLDDLKEMGYSASTISGLTIGMADIPETKTKDALVAEARKQVKQVSKMFRRGKLSDKERHDNIIKIWTDCKDAVQQEIAEFKDQKNPISVMQQSGARGNISNFTQLAGMRGLMATPSGELFEIPVISNFKEGLTVLELFMSTHGARKGMTDTALKTAQSGYLTRRLVDVAQDVIIREDDCGTDRGITAKAIVDKDAGLIESLYDRLVGRFTNRTIRDPQTGEVICSKGVLMDEQMAQKIVDAGVQEVQIRSILTCNTSHGICRKCYGRNLATAEEVEIGEAVGTVAAQSIGEPGTQLTLRTFHTGGVAGAEDITQGLPRVQELFEARNPKGRAVISEVDGVVDKIESNAAEHLQEITVKGKIDTRVYTIPYTAKPAVQEGDEIHRGDKLIPGSIDPKELIKVTDTLTTEEYILAEVQKSYRTQGVDLADKHAEVLTRQVLQKVRVLDPGETDILPGEVMDIAEFRDRNRDVIISGGIPATAQAYILGITKAALETNSFLSAASFQETTRVLTDASIRGKNDPLLGLKENVIIGKIIPAGTGMPIYRDQVPKADVQQPDSVYSIADLEKKMEDENKETESK</sequence>
<proteinExistence type="inferred from homology"/>
<protein>
    <recommendedName>
        <fullName evidence="1">DNA-directed RNA polymerase subunit beta'</fullName>
        <shortName evidence="1">RNAP subunit beta'</shortName>
        <ecNumber evidence="1">2.7.7.6</ecNumber>
    </recommendedName>
    <alternativeName>
        <fullName evidence="1">RNA polymerase subunit beta'</fullName>
    </alternativeName>
    <alternativeName>
        <fullName evidence="1">Transcriptase subunit beta'</fullName>
    </alternativeName>
</protein>
<name>RPOC_LACDB</name>
<dbReference type="EC" id="2.7.7.6" evidence="1"/>
<dbReference type="EMBL" id="CP000412">
    <property type="protein sequence ID" value="ABJ58001.1"/>
    <property type="molecule type" value="Genomic_DNA"/>
</dbReference>
<dbReference type="RefSeq" id="WP_011678026.1">
    <property type="nucleotide sequence ID" value="NC_008529.1"/>
</dbReference>
<dbReference type="SMR" id="Q04C21"/>
<dbReference type="KEGG" id="lbu:LBUL_0343"/>
<dbReference type="HOGENOM" id="CLU_000524_3_0_9"/>
<dbReference type="BioCyc" id="LDEL321956:LBUL_RS01605-MONOMER"/>
<dbReference type="GO" id="GO:0000428">
    <property type="term" value="C:DNA-directed RNA polymerase complex"/>
    <property type="evidence" value="ECO:0007669"/>
    <property type="project" value="UniProtKB-KW"/>
</dbReference>
<dbReference type="GO" id="GO:0003677">
    <property type="term" value="F:DNA binding"/>
    <property type="evidence" value="ECO:0007669"/>
    <property type="project" value="UniProtKB-UniRule"/>
</dbReference>
<dbReference type="GO" id="GO:0003899">
    <property type="term" value="F:DNA-directed RNA polymerase activity"/>
    <property type="evidence" value="ECO:0007669"/>
    <property type="project" value="UniProtKB-UniRule"/>
</dbReference>
<dbReference type="GO" id="GO:0000287">
    <property type="term" value="F:magnesium ion binding"/>
    <property type="evidence" value="ECO:0007669"/>
    <property type="project" value="UniProtKB-UniRule"/>
</dbReference>
<dbReference type="GO" id="GO:0008270">
    <property type="term" value="F:zinc ion binding"/>
    <property type="evidence" value="ECO:0007669"/>
    <property type="project" value="UniProtKB-UniRule"/>
</dbReference>
<dbReference type="GO" id="GO:0006351">
    <property type="term" value="P:DNA-templated transcription"/>
    <property type="evidence" value="ECO:0007669"/>
    <property type="project" value="UniProtKB-UniRule"/>
</dbReference>
<dbReference type="CDD" id="cd02655">
    <property type="entry name" value="RNAP_beta'_C"/>
    <property type="match status" value="1"/>
</dbReference>
<dbReference type="CDD" id="cd01609">
    <property type="entry name" value="RNAP_beta'_N"/>
    <property type="match status" value="1"/>
</dbReference>
<dbReference type="FunFam" id="4.10.860.120:FF:000001">
    <property type="entry name" value="DNA-directed RNA polymerase subunit beta"/>
    <property type="match status" value="1"/>
</dbReference>
<dbReference type="Gene3D" id="1.10.132.30">
    <property type="match status" value="1"/>
</dbReference>
<dbReference type="Gene3D" id="1.10.150.390">
    <property type="match status" value="1"/>
</dbReference>
<dbReference type="Gene3D" id="1.10.1790.20">
    <property type="match status" value="1"/>
</dbReference>
<dbReference type="Gene3D" id="1.10.40.90">
    <property type="match status" value="1"/>
</dbReference>
<dbReference type="Gene3D" id="2.40.40.20">
    <property type="match status" value="1"/>
</dbReference>
<dbReference type="Gene3D" id="2.40.50.100">
    <property type="match status" value="1"/>
</dbReference>
<dbReference type="Gene3D" id="4.10.860.120">
    <property type="entry name" value="RNA polymerase II, clamp domain"/>
    <property type="match status" value="1"/>
</dbReference>
<dbReference type="Gene3D" id="1.10.274.100">
    <property type="entry name" value="RNA polymerase Rpb1, domain 3"/>
    <property type="match status" value="1"/>
</dbReference>
<dbReference type="HAMAP" id="MF_01322">
    <property type="entry name" value="RNApol_bact_RpoC"/>
    <property type="match status" value="1"/>
</dbReference>
<dbReference type="InterPro" id="IPR045867">
    <property type="entry name" value="DNA-dir_RpoC_beta_prime"/>
</dbReference>
<dbReference type="InterPro" id="IPR012754">
    <property type="entry name" value="DNA-dir_RpoC_beta_prime_bact"/>
</dbReference>
<dbReference type="InterPro" id="IPR000722">
    <property type="entry name" value="RNA_pol_asu"/>
</dbReference>
<dbReference type="InterPro" id="IPR006592">
    <property type="entry name" value="RNA_pol_N"/>
</dbReference>
<dbReference type="InterPro" id="IPR007080">
    <property type="entry name" value="RNA_pol_Rpb1_1"/>
</dbReference>
<dbReference type="InterPro" id="IPR007066">
    <property type="entry name" value="RNA_pol_Rpb1_3"/>
</dbReference>
<dbReference type="InterPro" id="IPR042102">
    <property type="entry name" value="RNA_pol_Rpb1_3_sf"/>
</dbReference>
<dbReference type="InterPro" id="IPR007083">
    <property type="entry name" value="RNA_pol_Rpb1_4"/>
</dbReference>
<dbReference type="InterPro" id="IPR007081">
    <property type="entry name" value="RNA_pol_Rpb1_5"/>
</dbReference>
<dbReference type="InterPro" id="IPR044893">
    <property type="entry name" value="RNA_pol_Rpb1_clamp_domain"/>
</dbReference>
<dbReference type="InterPro" id="IPR038120">
    <property type="entry name" value="Rpb1_funnel_sf"/>
</dbReference>
<dbReference type="NCBIfam" id="TIGR02386">
    <property type="entry name" value="rpoC_TIGR"/>
    <property type="match status" value="1"/>
</dbReference>
<dbReference type="PANTHER" id="PTHR19376">
    <property type="entry name" value="DNA-DIRECTED RNA POLYMERASE"/>
    <property type="match status" value="1"/>
</dbReference>
<dbReference type="PANTHER" id="PTHR19376:SF54">
    <property type="entry name" value="DNA-DIRECTED RNA POLYMERASE SUBUNIT BETA"/>
    <property type="match status" value="1"/>
</dbReference>
<dbReference type="Pfam" id="PF04997">
    <property type="entry name" value="RNA_pol_Rpb1_1"/>
    <property type="match status" value="1"/>
</dbReference>
<dbReference type="Pfam" id="PF00623">
    <property type="entry name" value="RNA_pol_Rpb1_2"/>
    <property type="match status" value="2"/>
</dbReference>
<dbReference type="Pfam" id="PF04983">
    <property type="entry name" value="RNA_pol_Rpb1_3"/>
    <property type="match status" value="1"/>
</dbReference>
<dbReference type="Pfam" id="PF05000">
    <property type="entry name" value="RNA_pol_Rpb1_4"/>
    <property type="match status" value="1"/>
</dbReference>
<dbReference type="Pfam" id="PF04998">
    <property type="entry name" value="RNA_pol_Rpb1_5"/>
    <property type="match status" value="1"/>
</dbReference>
<dbReference type="SMART" id="SM00663">
    <property type="entry name" value="RPOLA_N"/>
    <property type="match status" value="1"/>
</dbReference>
<dbReference type="SUPFAM" id="SSF64484">
    <property type="entry name" value="beta and beta-prime subunits of DNA dependent RNA-polymerase"/>
    <property type="match status" value="1"/>
</dbReference>
<feature type="chain" id="PRO_0000308842" description="DNA-directed RNA polymerase subunit beta'">
    <location>
        <begin position="1"/>
        <end position="1221"/>
    </location>
</feature>
<feature type="binding site" evidence="1">
    <location>
        <position position="60"/>
    </location>
    <ligand>
        <name>Zn(2+)</name>
        <dbReference type="ChEBI" id="CHEBI:29105"/>
        <label>1</label>
    </ligand>
</feature>
<feature type="binding site" evidence="1">
    <location>
        <position position="62"/>
    </location>
    <ligand>
        <name>Zn(2+)</name>
        <dbReference type="ChEBI" id="CHEBI:29105"/>
        <label>1</label>
    </ligand>
</feature>
<feature type="binding site" evidence="1">
    <location>
        <position position="75"/>
    </location>
    <ligand>
        <name>Zn(2+)</name>
        <dbReference type="ChEBI" id="CHEBI:29105"/>
        <label>1</label>
    </ligand>
</feature>
<feature type="binding site" evidence="1">
    <location>
        <position position="78"/>
    </location>
    <ligand>
        <name>Zn(2+)</name>
        <dbReference type="ChEBI" id="CHEBI:29105"/>
        <label>1</label>
    </ligand>
</feature>
<feature type="binding site" evidence="1">
    <location>
        <position position="449"/>
    </location>
    <ligand>
        <name>Mg(2+)</name>
        <dbReference type="ChEBI" id="CHEBI:18420"/>
    </ligand>
</feature>
<feature type="binding site" evidence="1">
    <location>
        <position position="451"/>
    </location>
    <ligand>
        <name>Mg(2+)</name>
        <dbReference type="ChEBI" id="CHEBI:18420"/>
    </ligand>
</feature>
<feature type="binding site" evidence="1">
    <location>
        <position position="453"/>
    </location>
    <ligand>
        <name>Mg(2+)</name>
        <dbReference type="ChEBI" id="CHEBI:18420"/>
    </ligand>
</feature>
<feature type="binding site" evidence="1">
    <location>
        <position position="821"/>
    </location>
    <ligand>
        <name>Zn(2+)</name>
        <dbReference type="ChEBI" id="CHEBI:29105"/>
        <label>2</label>
    </ligand>
</feature>
<feature type="binding site" evidence="1">
    <location>
        <position position="896"/>
    </location>
    <ligand>
        <name>Zn(2+)</name>
        <dbReference type="ChEBI" id="CHEBI:29105"/>
        <label>2</label>
    </ligand>
</feature>
<feature type="binding site" evidence="1">
    <location>
        <position position="903"/>
    </location>
    <ligand>
        <name>Zn(2+)</name>
        <dbReference type="ChEBI" id="CHEBI:29105"/>
        <label>2</label>
    </ligand>
</feature>
<feature type="binding site" evidence="1">
    <location>
        <position position="906"/>
    </location>
    <ligand>
        <name>Zn(2+)</name>
        <dbReference type="ChEBI" id="CHEBI:29105"/>
        <label>2</label>
    </ligand>
</feature>
<accession>Q04C21</accession>
<gene>
    <name evidence="1" type="primary">rpoC</name>
    <name type="ordered locus">LBUL_0343</name>
</gene>
<keyword id="KW-0240">DNA-directed RNA polymerase</keyword>
<keyword id="KW-0460">Magnesium</keyword>
<keyword id="KW-0479">Metal-binding</keyword>
<keyword id="KW-0548">Nucleotidyltransferase</keyword>
<keyword id="KW-0804">Transcription</keyword>
<keyword id="KW-0808">Transferase</keyword>
<keyword id="KW-0862">Zinc</keyword>
<comment type="function">
    <text evidence="1">DNA-dependent RNA polymerase catalyzes the transcription of DNA into RNA using the four ribonucleoside triphosphates as substrates.</text>
</comment>
<comment type="catalytic activity">
    <reaction evidence="1">
        <text>RNA(n) + a ribonucleoside 5'-triphosphate = RNA(n+1) + diphosphate</text>
        <dbReference type="Rhea" id="RHEA:21248"/>
        <dbReference type="Rhea" id="RHEA-COMP:14527"/>
        <dbReference type="Rhea" id="RHEA-COMP:17342"/>
        <dbReference type="ChEBI" id="CHEBI:33019"/>
        <dbReference type="ChEBI" id="CHEBI:61557"/>
        <dbReference type="ChEBI" id="CHEBI:140395"/>
        <dbReference type="EC" id="2.7.7.6"/>
    </reaction>
</comment>
<comment type="cofactor">
    <cofactor evidence="1">
        <name>Mg(2+)</name>
        <dbReference type="ChEBI" id="CHEBI:18420"/>
    </cofactor>
    <text evidence="1">Binds 1 Mg(2+) ion per subunit.</text>
</comment>
<comment type="cofactor">
    <cofactor evidence="1">
        <name>Zn(2+)</name>
        <dbReference type="ChEBI" id="CHEBI:29105"/>
    </cofactor>
    <text evidence="1">Binds 2 Zn(2+) ions per subunit.</text>
</comment>
<comment type="subunit">
    <text evidence="1">The RNAP catalytic core consists of 2 alpha, 1 beta, 1 beta' and 1 omega subunit. When a sigma factor is associated with the core the holoenzyme is formed, which can initiate transcription.</text>
</comment>
<comment type="similarity">
    <text evidence="1">Belongs to the RNA polymerase beta' chain family.</text>
</comment>
<organism>
    <name type="scientific">Lactobacillus delbrueckii subsp. bulgaricus (strain ATCC BAA-365 / Lb-18)</name>
    <dbReference type="NCBI Taxonomy" id="321956"/>
    <lineage>
        <taxon>Bacteria</taxon>
        <taxon>Bacillati</taxon>
        <taxon>Bacillota</taxon>
        <taxon>Bacilli</taxon>
        <taxon>Lactobacillales</taxon>
        <taxon>Lactobacillaceae</taxon>
        <taxon>Lactobacillus</taxon>
    </lineage>
</organism>
<reference key="1">
    <citation type="journal article" date="2006" name="Proc. Natl. Acad. Sci. U.S.A.">
        <title>Comparative genomics of the lactic acid bacteria.</title>
        <authorList>
            <person name="Makarova K.S."/>
            <person name="Slesarev A."/>
            <person name="Wolf Y.I."/>
            <person name="Sorokin A."/>
            <person name="Mirkin B."/>
            <person name="Koonin E.V."/>
            <person name="Pavlov A."/>
            <person name="Pavlova N."/>
            <person name="Karamychev V."/>
            <person name="Polouchine N."/>
            <person name="Shakhova V."/>
            <person name="Grigoriev I."/>
            <person name="Lou Y."/>
            <person name="Rohksar D."/>
            <person name="Lucas S."/>
            <person name="Huang K."/>
            <person name="Goodstein D.M."/>
            <person name="Hawkins T."/>
            <person name="Plengvidhya V."/>
            <person name="Welker D."/>
            <person name="Hughes J."/>
            <person name="Goh Y."/>
            <person name="Benson A."/>
            <person name="Baldwin K."/>
            <person name="Lee J.-H."/>
            <person name="Diaz-Muniz I."/>
            <person name="Dosti B."/>
            <person name="Smeianov V."/>
            <person name="Wechter W."/>
            <person name="Barabote R."/>
            <person name="Lorca G."/>
            <person name="Altermann E."/>
            <person name="Barrangou R."/>
            <person name="Ganesan B."/>
            <person name="Xie Y."/>
            <person name="Rawsthorne H."/>
            <person name="Tamir D."/>
            <person name="Parker C."/>
            <person name="Breidt F."/>
            <person name="Broadbent J.R."/>
            <person name="Hutkins R."/>
            <person name="O'Sullivan D."/>
            <person name="Steele J."/>
            <person name="Unlu G."/>
            <person name="Saier M.H. Jr."/>
            <person name="Klaenhammer T."/>
            <person name="Richardson P."/>
            <person name="Kozyavkin S."/>
            <person name="Weimer B.C."/>
            <person name="Mills D.A."/>
        </authorList>
    </citation>
    <scope>NUCLEOTIDE SEQUENCE [LARGE SCALE GENOMIC DNA]</scope>
    <source>
        <strain>ATCC BAA-365 / Lb-18</strain>
    </source>
</reference>
<evidence type="ECO:0000255" key="1">
    <source>
        <dbReference type="HAMAP-Rule" id="MF_01322"/>
    </source>
</evidence>